<dbReference type="EMBL" id="AM180252">
    <property type="protein sequence ID" value="CAJ54937.1"/>
    <property type="molecule type" value="Genomic_DNA"/>
</dbReference>
<dbReference type="RefSeq" id="WP_011526966.1">
    <property type="nucleotide sequence ID" value="NC_008011.1"/>
</dbReference>
<dbReference type="SMR" id="Q1MPZ0"/>
<dbReference type="STRING" id="363253.LI0883"/>
<dbReference type="KEGG" id="lip:LI0883"/>
<dbReference type="eggNOG" id="COG2220">
    <property type="taxonomic scope" value="Bacteria"/>
</dbReference>
<dbReference type="HOGENOM" id="CLU_070010_4_0_7"/>
<dbReference type="OrthoDB" id="9789133at2"/>
<dbReference type="Proteomes" id="UP000002430">
    <property type="component" value="Chromosome"/>
</dbReference>
<dbReference type="GO" id="GO:0016787">
    <property type="term" value="F:hydrolase activity"/>
    <property type="evidence" value="ECO:0007669"/>
    <property type="project" value="UniProtKB-UniRule"/>
</dbReference>
<dbReference type="Gene3D" id="3.60.15.10">
    <property type="entry name" value="Ribonuclease Z/Hydroxyacylglutathione hydrolase-like"/>
    <property type="match status" value="1"/>
</dbReference>
<dbReference type="HAMAP" id="MF_00457">
    <property type="entry name" value="UPF0173"/>
    <property type="match status" value="1"/>
</dbReference>
<dbReference type="InterPro" id="IPR001279">
    <property type="entry name" value="Metallo-B-lactamas"/>
</dbReference>
<dbReference type="InterPro" id="IPR036866">
    <property type="entry name" value="RibonucZ/Hydroxyglut_hydro"/>
</dbReference>
<dbReference type="InterPro" id="IPR022877">
    <property type="entry name" value="UPF0173"/>
</dbReference>
<dbReference type="InterPro" id="IPR050114">
    <property type="entry name" value="UPF0173_UPF0282_UlaG_hydrolase"/>
</dbReference>
<dbReference type="NCBIfam" id="NF001911">
    <property type="entry name" value="PRK00685.1"/>
    <property type="match status" value="1"/>
</dbReference>
<dbReference type="PANTHER" id="PTHR43546:SF3">
    <property type="entry name" value="UPF0173 METAL-DEPENDENT HYDROLASE MJ1163"/>
    <property type="match status" value="1"/>
</dbReference>
<dbReference type="PANTHER" id="PTHR43546">
    <property type="entry name" value="UPF0173 METAL-DEPENDENT HYDROLASE MJ1163-RELATED"/>
    <property type="match status" value="1"/>
</dbReference>
<dbReference type="Pfam" id="PF13483">
    <property type="entry name" value="Lactamase_B_3"/>
    <property type="match status" value="1"/>
</dbReference>
<dbReference type="SMART" id="SM00849">
    <property type="entry name" value="Lactamase_B"/>
    <property type="match status" value="1"/>
</dbReference>
<dbReference type="SUPFAM" id="SSF56281">
    <property type="entry name" value="Metallo-hydrolase/oxidoreductase"/>
    <property type="match status" value="1"/>
</dbReference>
<organism>
    <name type="scientific">Lawsonia intracellularis (strain PHE/MN1-00)</name>
    <dbReference type="NCBI Taxonomy" id="363253"/>
    <lineage>
        <taxon>Bacteria</taxon>
        <taxon>Pseudomonadati</taxon>
        <taxon>Thermodesulfobacteriota</taxon>
        <taxon>Desulfovibrionia</taxon>
        <taxon>Desulfovibrionales</taxon>
        <taxon>Desulfovibrionaceae</taxon>
        <taxon>Lawsonia</taxon>
    </lineage>
</organism>
<protein>
    <recommendedName>
        <fullName evidence="1">UPF0173 metal-dependent hydrolase LI0883</fullName>
    </recommendedName>
</protein>
<evidence type="ECO:0000255" key="1">
    <source>
        <dbReference type="HAMAP-Rule" id="MF_00457"/>
    </source>
</evidence>
<gene>
    <name type="ordered locus">LI0883</name>
</gene>
<feature type="chain" id="PRO_0000367187" description="UPF0173 metal-dependent hydrolase LI0883">
    <location>
        <begin position="1"/>
        <end position="230"/>
    </location>
</feature>
<sequence length="230" mass="25600">MNTTIIWHGHSNFQINANGISVLIDPFFTNNPRCTKNWNEIQKPDIVLITHDHSDHLGDAIAICKSTGALCGCIVGTADKLIQQGMPQHLIIGEIGFNIGGTIERKGVRITMTQSFHTSESGSPAGYIITMPNNFTLYHPGDTGIFQTMKTFGKLYNLHLSLLPIGGFFTMDSYQAAYAAKMLKCKMVIPMHWGTFPVLEQTPERFKNYLKAMAPECKYIAMEPNTSKEL</sequence>
<comment type="similarity">
    <text evidence="1">Belongs to the UPF0173 family.</text>
</comment>
<reference key="1">
    <citation type="submission" date="2005-11" db="EMBL/GenBank/DDBJ databases">
        <title>The complete genome sequence of Lawsonia intracellularis: the causative agent of proliferative enteropathy.</title>
        <authorList>
            <person name="Kaur K."/>
            <person name="Zhang Q."/>
            <person name="Beckler D."/>
            <person name="Munir S."/>
            <person name="Li L."/>
            <person name="Kinsley K."/>
            <person name="Herron L."/>
            <person name="Peterson A."/>
            <person name="May B."/>
            <person name="Singh S."/>
            <person name="Gebhart C."/>
            <person name="Kapur V."/>
        </authorList>
    </citation>
    <scope>NUCLEOTIDE SEQUENCE [LARGE SCALE GENOMIC DNA]</scope>
    <source>
        <strain>PHE/MN1-00</strain>
    </source>
</reference>
<keyword id="KW-0378">Hydrolase</keyword>
<keyword id="KW-1185">Reference proteome</keyword>
<proteinExistence type="inferred from homology"/>
<accession>Q1MPZ0</accession>
<name>Y883_LAWIP</name>